<comment type="function">
    <text>Integrin alpha-2/beta-1 is a collagen receptor, being responsible for adhesion of platelets and other cells to collagens, modulation of collagen and collagenase gene expression, force generation and organization of newly synthesized extracellular matrix. It is also a receptor for laminins, collagen C-propeptides and E-cadherin. Mice homozygous for a null mutation in the alpha-2 die very early in embryogenesis.</text>
</comment>
<comment type="subunit">
    <text evidence="6">Heterodimer of an alpha and a beta subunit. Alpha-2 associates with beta-1. Interacts with HPS5 and RAB21.</text>
</comment>
<comment type="subcellular location">
    <subcellularLocation>
        <location>Membrane</location>
        <topology>Single-pass type I membrane protein</topology>
    </subcellularLocation>
</comment>
<comment type="domain">
    <text>The integrin I-domain (insert) is a VWFA domain. Integrins with I-domains do not undergo protease cleavage.</text>
</comment>
<comment type="similarity">
    <text evidence="7">Belongs to the integrin alpha chain family.</text>
</comment>
<accession>Q62469</accession>
<accession>Q62163</accession>
<accession>Q6P1C7</accession>
<name>ITA2_MOUSE</name>
<organism>
    <name type="scientific">Mus musculus</name>
    <name type="common">Mouse</name>
    <dbReference type="NCBI Taxonomy" id="10090"/>
    <lineage>
        <taxon>Eukaryota</taxon>
        <taxon>Metazoa</taxon>
        <taxon>Chordata</taxon>
        <taxon>Craniata</taxon>
        <taxon>Vertebrata</taxon>
        <taxon>Euteleostomi</taxon>
        <taxon>Mammalia</taxon>
        <taxon>Eutheria</taxon>
        <taxon>Euarchontoglires</taxon>
        <taxon>Glires</taxon>
        <taxon>Rodentia</taxon>
        <taxon>Myomorpha</taxon>
        <taxon>Muroidea</taxon>
        <taxon>Muridae</taxon>
        <taxon>Murinae</taxon>
        <taxon>Mus</taxon>
        <taxon>Mus</taxon>
    </lineage>
</organism>
<gene>
    <name type="primary">Itga2</name>
</gene>
<dbReference type="EMBL" id="Z29987">
    <property type="protein sequence ID" value="CAA82877.1"/>
    <property type="molecule type" value="mRNA"/>
</dbReference>
<dbReference type="EMBL" id="CH466568">
    <property type="protein sequence ID" value="EDL18370.1"/>
    <property type="molecule type" value="Genomic_DNA"/>
</dbReference>
<dbReference type="EMBL" id="BC065139">
    <property type="protein sequence ID" value="AAH65139.1"/>
    <property type="molecule type" value="mRNA"/>
</dbReference>
<dbReference type="EMBL" id="X75427">
    <property type="protein sequence ID" value="CAA53178.1"/>
    <property type="molecule type" value="mRNA"/>
</dbReference>
<dbReference type="CCDS" id="CCDS26787.1"/>
<dbReference type="PIR" id="S44142">
    <property type="entry name" value="S44142"/>
</dbReference>
<dbReference type="RefSeq" id="NP_032422.2">
    <property type="nucleotide sequence ID" value="NM_008396.2"/>
</dbReference>
<dbReference type="SMR" id="Q62469"/>
<dbReference type="BioGRID" id="200814">
    <property type="interactions" value="6"/>
</dbReference>
<dbReference type="ComplexPortal" id="CPX-3115">
    <property type="entry name" value="Integrin alpha2-beta1 complex"/>
</dbReference>
<dbReference type="FunCoup" id="Q62469">
    <property type="interactions" value="831"/>
</dbReference>
<dbReference type="STRING" id="10090.ENSMUSP00000053891"/>
<dbReference type="GlyConnect" id="2396">
    <property type="glycosylation" value="1 N-Linked glycan (1 site)"/>
</dbReference>
<dbReference type="GlyCosmos" id="Q62469">
    <property type="glycosylation" value="9 sites, 1 glycan"/>
</dbReference>
<dbReference type="GlyGen" id="Q62469">
    <property type="glycosylation" value="9 sites, 6 N-linked glycans (7 sites)"/>
</dbReference>
<dbReference type="iPTMnet" id="Q62469"/>
<dbReference type="PhosphoSitePlus" id="Q62469"/>
<dbReference type="SwissPalm" id="Q62469"/>
<dbReference type="CPTAC" id="non-CPTAC-3831"/>
<dbReference type="PaxDb" id="10090-ENSMUSP00000053891"/>
<dbReference type="PeptideAtlas" id="Q62469"/>
<dbReference type="ProteomicsDB" id="269344"/>
<dbReference type="Antibodypedia" id="10993">
    <property type="antibodies" value="1467 antibodies from 47 providers"/>
</dbReference>
<dbReference type="DNASU" id="16398"/>
<dbReference type="Ensembl" id="ENSMUST00000056117.10">
    <property type="protein sequence ID" value="ENSMUSP00000053891.9"/>
    <property type="gene ID" value="ENSMUSG00000015533.10"/>
</dbReference>
<dbReference type="GeneID" id="16398"/>
<dbReference type="KEGG" id="mmu:16398"/>
<dbReference type="UCSC" id="uc007rxw.1">
    <property type="organism name" value="mouse"/>
</dbReference>
<dbReference type="AGR" id="MGI:96600"/>
<dbReference type="CTD" id="3673"/>
<dbReference type="MGI" id="MGI:96600">
    <property type="gene designation" value="Itga2"/>
</dbReference>
<dbReference type="VEuPathDB" id="HostDB:ENSMUSG00000015533"/>
<dbReference type="eggNOG" id="KOG3637">
    <property type="taxonomic scope" value="Eukaryota"/>
</dbReference>
<dbReference type="GeneTree" id="ENSGT00940000156303"/>
<dbReference type="HOGENOM" id="CLU_004111_2_1_1"/>
<dbReference type="InParanoid" id="Q62469"/>
<dbReference type="OMA" id="IQYASQW"/>
<dbReference type="OrthoDB" id="5317514at2759"/>
<dbReference type="PhylomeDB" id="Q62469"/>
<dbReference type="TreeFam" id="TF105391"/>
<dbReference type="Reactome" id="R-MMU-216083">
    <property type="pathway name" value="Integrin cell surface interactions"/>
</dbReference>
<dbReference type="Reactome" id="R-MMU-3000170">
    <property type="pathway name" value="Syndecan interactions"/>
</dbReference>
<dbReference type="Reactome" id="R-MMU-3000178">
    <property type="pathway name" value="ECM proteoglycans"/>
</dbReference>
<dbReference type="Reactome" id="R-MMU-8874081">
    <property type="pathway name" value="MET activates PTK2 signaling"/>
</dbReference>
<dbReference type="BioGRID-ORCS" id="16398">
    <property type="hits" value="3 hits in 79 CRISPR screens"/>
</dbReference>
<dbReference type="ChiTaRS" id="Itga2">
    <property type="organism name" value="mouse"/>
</dbReference>
<dbReference type="PRO" id="PR:Q62469"/>
<dbReference type="Proteomes" id="UP000000589">
    <property type="component" value="Chromosome 13"/>
</dbReference>
<dbReference type="RNAct" id="Q62469">
    <property type="molecule type" value="protein"/>
</dbReference>
<dbReference type="Bgee" id="ENSMUSG00000015533">
    <property type="expression patterns" value="Expressed in gastrula and 155 other cell types or tissues"/>
</dbReference>
<dbReference type="ExpressionAtlas" id="Q62469">
    <property type="expression patterns" value="baseline and differential"/>
</dbReference>
<dbReference type="GO" id="GO:0043679">
    <property type="term" value="C:axon terminus"/>
    <property type="evidence" value="ECO:0007669"/>
    <property type="project" value="Ensembl"/>
</dbReference>
<dbReference type="GO" id="GO:0045178">
    <property type="term" value="C:basal part of cell"/>
    <property type="evidence" value="ECO:0000314"/>
    <property type="project" value="MGI"/>
</dbReference>
<dbReference type="GO" id="GO:0009986">
    <property type="term" value="C:cell surface"/>
    <property type="evidence" value="ECO:0000314"/>
    <property type="project" value="UniProtKB"/>
</dbReference>
<dbReference type="GO" id="GO:0009897">
    <property type="term" value="C:external side of plasma membrane"/>
    <property type="evidence" value="ECO:0000314"/>
    <property type="project" value="MGI"/>
</dbReference>
<dbReference type="GO" id="GO:0005925">
    <property type="term" value="C:focal adhesion"/>
    <property type="evidence" value="ECO:0007669"/>
    <property type="project" value="Ensembl"/>
</dbReference>
<dbReference type="GO" id="GO:0034666">
    <property type="term" value="C:integrin alpha2-beta1 complex"/>
    <property type="evidence" value="ECO:0007669"/>
    <property type="project" value="Ensembl"/>
</dbReference>
<dbReference type="GO" id="GO:0048471">
    <property type="term" value="C:perinuclear region of cytoplasm"/>
    <property type="evidence" value="ECO:0007669"/>
    <property type="project" value="Ensembl"/>
</dbReference>
<dbReference type="GO" id="GO:0005886">
    <property type="term" value="C:plasma membrane"/>
    <property type="evidence" value="ECO:0000304"/>
    <property type="project" value="Reactome"/>
</dbReference>
<dbReference type="GO" id="GO:0001540">
    <property type="term" value="F:amyloid-beta binding"/>
    <property type="evidence" value="ECO:0000314"/>
    <property type="project" value="ARUK-UCL"/>
</dbReference>
<dbReference type="GO" id="GO:0098639">
    <property type="term" value="F:collagen binding involved in cell-matrix adhesion"/>
    <property type="evidence" value="ECO:0007669"/>
    <property type="project" value="Ensembl"/>
</dbReference>
<dbReference type="GO" id="GO:0038064">
    <property type="term" value="F:collagen receptor activity"/>
    <property type="evidence" value="ECO:0007669"/>
    <property type="project" value="Ensembl"/>
</dbReference>
<dbReference type="GO" id="GO:0005178">
    <property type="term" value="F:integrin binding"/>
    <property type="evidence" value="ECO:0007669"/>
    <property type="project" value="Ensembl"/>
</dbReference>
<dbReference type="GO" id="GO:0043236">
    <property type="term" value="F:laminin binding"/>
    <property type="evidence" value="ECO:0007669"/>
    <property type="project" value="Ensembl"/>
</dbReference>
<dbReference type="GO" id="GO:0046872">
    <property type="term" value="F:metal ion binding"/>
    <property type="evidence" value="ECO:0007669"/>
    <property type="project" value="UniProtKB-KW"/>
</dbReference>
<dbReference type="GO" id="GO:0033627">
    <property type="term" value="P:cell adhesion mediated by integrin"/>
    <property type="evidence" value="ECO:0007669"/>
    <property type="project" value="Ensembl"/>
</dbReference>
<dbReference type="GO" id="GO:0071392">
    <property type="term" value="P:cellular response to estradiol stimulus"/>
    <property type="evidence" value="ECO:0007669"/>
    <property type="project" value="Ensembl"/>
</dbReference>
<dbReference type="GO" id="GO:0071260">
    <property type="term" value="P:cellular response to mechanical stimulus"/>
    <property type="evidence" value="ECO:0007669"/>
    <property type="project" value="Ensembl"/>
</dbReference>
<dbReference type="GO" id="GO:0050966">
    <property type="term" value="P:detection of mechanical stimulus involved in sensory perception of pain"/>
    <property type="evidence" value="ECO:0007669"/>
    <property type="project" value="Ensembl"/>
</dbReference>
<dbReference type="GO" id="GO:0007565">
    <property type="term" value="P:female pregnancy"/>
    <property type="evidence" value="ECO:0007669"/>
    <property type="project" value="Ensembl"/>
</dbReference>
<dbReference type="GO" id="GO:0048041">
    <property type="term" value="P:focal adhesion assembly"/>
    <property type="evidence" value="ECO:0007669"/>
    <property type="project" value="Ensembl"/>
</dbReference>
<dbReference type="GO" id="GO:0070365">
    <property type="term" value="P:hepatocyte differentiation"/>
    <property type="evidence" value="ECO:0007669"/>
    <property type="project" value="Ensembl"/>
</dbReference>
<dbReference type="GO" id="GO:0006971">
    <property type="term" value="P:hypotonic response"/>
    <property type="evidence" value="ECO:0007669"/>
    <property type="project" value="Ensembl"/>
</dbReference>
<dbReference type="GO" id="GO:0007229">
    <property type="term" value="P:integrin-mediated signaling pathway"/>
    <property type="evidence" value="ECO:0007669"/>
    <property type="project" value="UniProtKB-KW"/>
</dbReference>
<dbReference type="GO" id="GO:0030879">
    <property type="term" value="P:mammary gland development"/>
    <property type="evidence" value="ECO:0007669"/>
    <property type="project" value="Ensembl"/>
</dbReference>
<dbReference type="GO" id="GO:0048333">
    <property type="term" value="P:mesodermal cell differentiation"/>
    <property type="evidence" value="ECO:0007669"/>
    <property type="project" value="Ensembl"/>
</dbReference>
<dbReference type="GO" id="GO:0045785">
    <property type="term" value="P:positive regulation of cell adhesion"/>
    <property type="evidence" value="ECO:0007669"/>
    <property type="project" value="Ensembl"/>
</dbReference>
<dbReference type="GO" id="GO:0031346">
    <property type="term" value="P:positive regulation of cell projection organization"/>
    <property type="evidence" value="ECO:0007669"/>
    <property type="project" value="Ensembl"/>
</dbReference>
<dbReference type="GO" id="GO:0032967">
    <property type="term" value="P:positive regulation of collagen biosynthetic process"/>
    <property type="evidence" value="ECO:0007669"/>
    <property type="project" value="Ensembl"/>
</dbReference>
<dbReference type="GO" id="GO:0010634">
    <property type="term" value="P:positive regulation of epithelial cell migration"/>
    <property type="evidence" value="ECO:0007669"/>
    <property type="project" value="Ensembl"/>
</dbReference>
<dbReference type="GO" id="GO:0002687">
    <property type="term" value="P:positive regulation of leukocyte migration"/>
    <property type="evidence" value="ECO:0007669"/>
    <property type="project" value="Ensembl"/>
</dbReference>
<dbReference type="GO" id="GO:0060100">
    <property type="term" value="P:positive regulation of phagocytosis, engulfment"/>
    <property type="evidence" value="ECO:0007669"/>
    <property type="project" value="Ensembl"/>
</dbReference>
<dbReference type="GO" id="GO:0050927">
    <property type="term" value="P:positive regulation of positive chemotaxis"/>
    <property type="evidence" value="ECO:0007669"/>
    <property type="project" value="Ensembl"/>
</dbReference>
<dbReference type="GO" id="GO:0014911">
    <property type="term" value="P:positive regulation of smooth muscle cell migration"/>
    <property type="evidence" value="ECO:0007669"/>
    <property type="project" value="Ensembl"/>
</dbReference>
<dbReference type="GO" id="GO:0048661">
    <property type="term" value="P:positive regulation of smooth muscle cell proliferation"/>
    <property type="evidence" value="ECO:0007669"/>
    <property type="project" value="Ensembl"/>
</dbReference>
<dbReference type="GO" id="GO:0045987">
    <property type="term" value="P:positive regulation of smooth muscle contraction"/>
    <property type="evidence" value="ECO:0007669"/>
    <property type="project" value="Ensembl"/>
</dbReference>
<dbReference type="GO" id="GO:0045727">
    <property type="term" value="P:positive regulation of translation"/>
    <property type="evidence" value="ECO:0007669"/>
    <property type="project" value="Ensembl"/>
</dbReference>
<dbReference type="GO" id="GO:0051971">
    <property type="term" value="P:positive regulation of transmission of nerve impulse"/>
    <property type="evidence" value="ECO:0007669"/>
    <property type="project" value="Ensembl"/>
</dbReference>
<dbReference type="GO" id="GO:0014075">
    <property type="term" value="P:response to amine"/>
    <property type="evidence" value="ECO:0007669"/>
    <property type="project" value="Ensembl"/>
</dbReference>
<dbReference type="GO" id="GO:0001666">
    <property type="term" value="P:response to hypoxia"/>
    <property type="evidence" value="ECO:0007669"/>
    <property type="project" value="Ensembl"/>
</dbReference>
<dbReference type="GO" id="GO:0033591">
    <property type="term" value="P:response to L-ascorbic acid"/>
    <property type="evidence" value="ECO:0007669"/>
    <property type="project" value="Ensembl"/>
</dbReference>
<dbReference type="GO" id="GO:0014850">
    <property type="term" value="P:response to muscle activity"/>
    <property type="evidence" value="ECO:0007669"/>
    <property type="project" value="Ensembl"/>
</dbReference>
<dbReference type="GO" id="GO:0071107">
    <property type="term" value="P:response to parathyroid hormone"/>
    <property type="evidence" value="ECO:0007669"/>
    <property type="project" value="Ensembl"/>
</dbReference>
<dbReference type="GO" id="GO:0009410">
    <property type="term" value="P:response to xenobiotic stimulus"/>
    <property type="evidence" value="ECO:0007669"/>
    <property type="project" value="Ensembl"/>
</dbReference>
<dbReference type="GO" id="GO:0043589">
    <property type="term" value="P:skin morphogenesis"/>
    <property type="evidence" value="ECO:0007669"/>
    <property type="project" value="Ensembl"/>
</dbReference>
<dbReference type="GO" id="GO:0006929">
    <property type="term" value="P:substrate-dependent cell migration"/>
    <property type="evidence" value="ECO:0007669"/>
    <property type="project" value="Ensembl"/>
</dbReference>
<dbReference type="CDD" id="cd01469">
    <property type="entry name" value="vWA_integrins_alpha_subunit"/>
    <property type="match status" value="1"/>
</dbReference>
<dbReference type="FunFam" id="2.130.10.130:FF:000008">
    <property type="entry name" value="Integrin subunit alpha 2"/>
    <property type="match status" value="1"/>
</dbReference>
<dbReference type="FunFam" id="2.60.40.1460:FF:000005">
    <property type="entry name" value="Integrin subunit alpha 2"/>
    <property type="match status" value="1"/>
</dbReference>
<dbReference type="FunFam" id="2.60.40.1530:FF:000010">
    <property type="entry name" value="Integrin subunit alpha 2"/>
    <property type="match status" value="1"/>
</dbReference>
<dbReference type="FunFam" id="3.40.50.410:FF:000012">
    <property type="entry name" value="Integrin, alpha 10"/>
    <property type="match status" value="1"/>
</dbReference>
<dbReference type="Gene3D" id="1.20.5.930">
    <property type="entry name" value="Bicelle-embedded integrin alpha(iib) transmembrane segment"/>
    <property type="match status" value="1"/>
</dbReference>
<dbReference type="Gene3D" id="2.130.10.130">
    <property type="entry name" value="Integrin alpha, N-terminal"/>
    <property type="match status" value="1"/>
</dbReference>
<dbReference type="Gene3D" id="2.60.40.1460">
    <property type="entry name" value="Integrin domains. Chain A, domain 2"/>
    <property type="match status" value="1"/>
</dbReference>
<dbReference type="Gene3D" id="2.60.40.1510">
    <property type="entry name" value="ntegrin, alpha v. Chain A, domain 3"/>
    <property type="match status" value="1"/>
</dbReference>
<dbReference type="Gene3D" id="2.60.40.1530">
    <property type="entry name" value="ntegrin, alpha v. Chain A, domain 4"/>
    <property type="match status" value="1"/>
</dbReference>
<dbReference type="Gene3D" id="3.40.50.410">
    <property type="entry name" value="von Willebrand factor, type A domain"/>
    <property type="match status" value="1"/>
</dbReference>
<dbReference type="InterPro" id="IPR013517">
    <property type="entry name" value="FG-GAP"/>
</dbReference>
<dbReference type="InterPro" id="IPR013519">
    <property type="entry name" value="Int_alpha_beta-p"/>
</dbReference>
<dbReference type="InterPro" id="IPR000413">
    <property type="entry name" value="Integrin_alpha"/>
</dbReference>
<dbReference type="InterPro" id="IPR018184">
    <property type="entry name" value="Integrin_alpha_C_CS"/>
</dbReference>
<dbReference type="InterPro" id="IPR048285">
    <property type="entry name" value="Integrin_alpha_Ig-like_2"/>
</dbReference>
<dbReference type="InterPro" id="IPR048286">
    <property type="entry name" value="Integrin_alpha_Ig-like_3"/>
</dbReference>
<dbReference type="InterPro" id="IPR028994">
    <property type="entry name" value="Integrin_alpha_N"/>
</dbReference>
<dbReference type="InterPro" id="IPR032695">
    <property type="entry name" value="Integrin_dom_sf"/>
</dbReference>
<dbReference type="InterPro" id="IPR002035">
    <property type="entry name" value="VWF_A"/>
</dbReference>
<dbReference type="InterPro" id="IPR036465">
    <property type="entry name" value="vWFA_dom_sf"/>
</dbReference>
<dbReference type="PANTHER" id="PTHR23220">
    <property type="entry name" value="INTEGRIN ALPHA"/>
    <property type="match status" value="1"/>
</dbReference>
<dbReference type="PANTHER" id="PTHR23220:SF23">
    <property type="entry name" value="INTEGRIN ALPHA-2"/>
    <property type="match status" value="1"/>
</dbReference>
<dbReference type="Pfam" id="PF01839">
    <property type="entry name" value="FG-GAP"/>
    <property type="match status" value="2"/>
</dbReference>
<dbReference type="Pfam" id="PF20805">
    <property type="entry name" value="Integrin_A_Ig_2"/>
    <property type="match status" value="1"/>
</dbReference>
<dbReference type="Pfam" id="PF20806">
    <property type="entry name" value="Integrin_A_Ig_3"/>
    <property type="match status" value="1"/>
</dbReference>
<dbReference type="Pfam" id="PF00357">
    <property type="entry name" value="Integrin_alpha"/>
    <property type="match status" value="1"/>
</dbReference>
<dbReference type="Pfam" id="PF00092">
    <property type="entry name" value="VWA"/>
    <property type="match status" value="1"/>
</dbReference>
<dbReference type="PRINTS" id="PR01185">
    <property type="entry name" value="INTEGRINA"/>
</dbReference>
<dbReference type="PRINTS" id="PR00453">
    <property type="entry name" value="VWFADOMAIN"/>
</dbReference>
<dbReference type="SMART" id="SM00191">
    <property type="entry name" value="Int_alpha"/>
    <property type="match status" value="5"/>
</dbReference>
<dbReference type="SMART" id="SM00327">
    <property type="entry name" value="VWA"/>
    <property type="match status" value="1"/>
</dbReference>
<dbReference type="SUPFAM" id="SSF69318">
    <property type="entry name" value="Integrin alpha N-terminal domain"/>
    <property type="match status" value="1"/>
</dbReference>
<dbReference type="SUPFAM" id="SSF69179">
    <property type="entry name" value="Integrin domains"/>
    <property type="match status" value="3"/>
</dbReference>
<dbReference type="SUPFAM" id="SSF53300">
    <property type="entry name" value="vWA-like"/>
    <property type="match status" value="1"/>
</dbReference>
<dbReference type="PROSITE" id="PS51470">
    <property type="entry name" value="FG_GAP"/>
    <property type="match status" value="7"/>
</dbReference>
<dbReference type="PROSITE" id="PS00242">
    <property type="entry name" value="INTEGRIN_ALPHA"/>
    <property type="match status" value="1"/>
</dbReference>
<dbReference type="PROSITE" id="PS50234">
    <property type="entry name" value="VWFA"/>
    <property type="match status" value="1"/>
</dbReference>
<sequence length="1178" mass="128955">MGPGQAGGALLLRLLMLVQGILNCLAYNVGLPGAKIFSGPSSEQFGYSVQQLTNPQGNWLLVGSPWSGFPENRMGDVYKCPVDLPTATCEKLNLQNSASISNVTEIKTNMSLGLTLTRNPGTGGFLTCGPLWAHQCGNQYYATGICSDVSPDFQFLTSFSPAVQACPSLVDVVVVCDESNSIYPWEAVKNFLVKFVTGLDIGPKKTQVALIQYANEPRIIFNLNDFETKEDMVQATSETRQHGGDLTNTFRAIEFARDYAYSQTSGGRPGATKVMVVVTDGESHDGSKLKTVIQQCNDDEILRFGIAVLGYLNRNALDTKNLIKEIKAIASTPTERYFFNVADEAALLEKAGTLGEQIFSIEGTVQGGDNFQMEMAQVGFSADYAPQNDILMLGAVGAFDWSGTLVQETSHKPVIFPKQAFDQVLQDRNHSSFLGYSVAAISTEDGVHFVAGAPRANYTGQIVLYSVNKQGNVTVIQSHRGDQIGSYFGSVLCSVDVDKDTITDVLLVGAPTYMNDLKKEEGKVYLFTITKGILNQHQFLEGPEGTGNARFGSAIAALSDINMDGFNDVIVGSPVENENSGAVYIYNGHQGTIRTKYSQKILGSNGAFRRHLQFFGRSLDGYGDLNGDSITDVSIGALGQVIQLWSQSIADVAIEALFTPDKITLLNKDAKITLKLCFRAEFRPAGQNNQVAILFNMTLDADGHSSRVTSRGVFRENSERFLQKNMVVNEVQKCSEHHISIQKPSDVVNPLDLRVDISLENPGTSPALEAYSETVKVFSIPFYKECGSDGICISDLILDVQQLPAIQTQSFIVSNQNKRLTFSVILKNRGESAYNTVVLAEFSENLFFASFSMPVDGTEVTCEVGSSQKSVTCDVGYPALKSEQQVTFTINFDFNLQNLQNQAAINFQAFSESQETNKADNSVSLTIPLLYDAELHLTRSTNINFYEISSDENAPSVIKSVEDIGPKFIFSLKVTAGSAPVSMALVTIHIPQYTKEKNPLLYLTGIQTDQAGDISCTAEINPLKLPHTAPSVSFKNENFRHTKELDCRTTSCSNITCWLKDLHMKAEYFINVTTRVWNRTFAASTFQTVQLTAAAEIDTHNPQLFVIEENAVTIPLMIMKPTEKAEVPTGVIIGSIIAGILLLLAMTAGLWKLGFFKRQYKKMGQNPDEMDETTELNS</sequence>
<proteinExistence type="evidence at protein level"/>
<keyword id="KW-0106">Calcium</keyword>
<keyword id="KW-0130">Cell adhesion</keyword>
<keyword id="KW-1015">Disulfide bond</keyword>
<keyword id="KW-0325">Glycoprotein</keyword>
<keyword id="KW-0401">Integrin</keyword>
<keyword id="KW-0460">Magnesium</keyword>
<keyword id="KW-0472">Membrane</keyword>
<keyword id="KW-0479">Metal-binding</keyword>
<keyword id="KW-0675">Receptor</keyword>
<keyword id="KW-1185">Reference proteome</keyword>
<keyword id="KW-0677">Repeat</keyword>
<keyword id="KW-0732">Signal</keyword>
<keyword id="KW-0812">Transmembrane</keyword>
<keyword id="KW-1133">Transmembrane helix</keyword>
<reference key="1">
    <citation type="journal article" date="1994" name="Cell Adhes. Commun.">
        <title>The mouse VLA-2 homologue supports collagen and laminin adhesion but not virus binding.</title>
        <authorList>
            <person name="Edelman J.M."/>
            <person name="Chan B.M."/>
            <person name="Uniyal S."/>
            <person name="Onodera H."/>
            <person name="Wang D.Z."/>
            <person name="Damjanovich L."/>
            <person name="Latzer D.B."/>
            <person name="Finberg R.W."/>
            <person name="Bergelson J.M."/>
        </authorList>
    </citation>
    <scope>NUCLEOTIDE SEQUENCE [MRNA]</scope>
    <source>
        <strain>C57BL/6 X CBA</strain>
        <tissue>Lung</tissue>
    </source>
</reference>
<reference key="2">
    <citation type="submission" date="2005-07" db="EMBL/GenBank/DDBJ databases">
        <authorList>
            <person name="Mural R.J."/>
            <person name="Adams M.D."/>
            <person name="Myers E.W."/>
            <person name="Smith H.O."/>
            <person name="Venter J.C."/>
        </authorList>
    </citation>
    <scope>NUCLEOTIDE SEQUENCE [LARGE SCALE GENOMIC DNA]</scope>
</reference>
<reference key="3">
    <citation type="journal article" date="2004" name="Genome Res.">
        <title>The status, quality, and expansion of the NIH full-length cDNA project: the Mammalian Gene Collection (MGC).</title>
        <authorList>
            <consortium name="The MGC Project Team"/>
        </authorList>
    </citation>
    <scope>NUCLEOTIDE SEQUENCE [LARGE SCALE MRNA]</scope>
    <source>
        <strain>C57BL/6J</strain>
        <tissue>Eye</tissue>
    </source>
</reference>
<reference key="4">
    <citation type="journal article" date="1994" name="Dev. Dyn.">
        <title>Complex patterns of expression suggest extensive roles for the alpha 2 beta 1 integrin in murine development.</title>
        <authorList>
            <person name="Wu J.E."/>
            <person name="Santoro S.A."/>
        </authorList>
    </citation>
    <scope>NUCLEOTIDE SEQUENCE [MRNA] OF 450-1178</scope>
    <source>
        <tissue>Lung</tissue>
    </source>
</reference>
<reference key="5">
    <citation type="journal article" date="2006" name="J. Cell Biol.">
        <title>Small GTPase Rab21 regulates cell adhesion and controls endosomal traffic of beta1-integrins.</title>
        <authorList>
            <person name="Pellinen T."/>
            <person name="Arjonen A."/>
            <person name="Vuoriluoto K."/>
            <person name="Kallio K."/>
            <person name="Fransen J.A.M."/>
            <person name="Ivaska J."/>
        </authorList>
    </citation>
    <scope>INTERACTION WITH RAB21</scope>
</reference>
<reference key="6">
    <citation type="journal article" date="2010" name="Cell">
        <title>A tissue-specific atlas of mouse protein phosphorylation and expression.</title>
        <authorList>
            <person name="Huttlin E.L."/>
            <person name="Jedrychowski M.P."/>
            <person name="Elias J.E."/>
            <person name="Goswami T."/>
            <person name="Rad R."/>
            <person name="Beausoleil S.A."/>
            <person name="Villen J."/>
            <person name="Haas W."/>
            <person name="Sowa M.E."/>
            <person name="Gygi S.P."/>
        </authorList>
    </citation>
    <scope>IDENTIFICATION BY MASS SPECTROMETRY [LARGE SCALE ANALYSIS]</scope>
    <source>
        <tissue>Lung</tissue>
        <tissue>Spleen</tissue>
    </source>
</reference>
<protein>
    <recommendedName>
        <fullName>Integrin alpha-2</fullName>
    </recommendedName>
    <alternativeName>
        <fullName>CD49 antigen-like family member B</fullName>
    </alternativeName>
    <alternativeName>
        <fullName>Collagen receptor</fullName>
    </alternativeName>
    <alternativeName>
        <fullName>Platelet membrane glycoprotein Ia</fullName>
        <shortName>GPIa</shortName>
    </alternativeName>
    <alternativeName>
        <fullName>VLA-2 subunit alpha</fullName>
    </alternativeName>
    <cdAntigenName>CD49b</cdAntigenName>
</protein>
<feature type="signal peptide" evidence="1">
    <location>
        <begin position="1"/>
        <end position="26"/>
    </location>
</feature>
<feature type="chain" id="PRO_0000016234" description="Integrin alpha-2">
    <location>
        <begin position="27"/>
        <end position="1178"/>
    </location>
</feature>
<feature type="topological domain" description="Extracellular" evidence="3">
    <location>
        <begin position="27"/>
        <end position="1129"/>
    </location>
</feature>
<feature type="transmembrane region" description="Helical" evidence="3">
    <location>
        <begin position="1130"/>
        <end position="1151"/>
    </location>
</feature>
<feature type="topological domain" description="Cytoplasmic" evidence="3">
    <location>
        <begin position="1152"/>
        <end position="1178"/>
    </location>
</feature>
<feature type="repeat" description="FG-GAP 1" evidence="5">
    <location>
        <begin position="31"/>
        <end position="89"/>
    </location>
</feature>
<feature type="repeat" description="FG-GAP 2" evidence="5">
    <location>
        <begin position="98"/>
        <end position="158"/>
    </location>
</feature>
<feature type="domain" description="VWFA" evidence="4">
    <location>
        <begin position="185"/>
        <end position="362"/>
    </location>
</feature>
<feature type="repeat" description="FG-GAP 3" evidence="5">
    <location>
        <begin position="363"/>
        <end position="417"/>
    </location>
</feature>
<feature type="repeat" description="FG-GAP 4" evidence="5">
    <location>
        <begin position="420"/>
        <end position="472"/>
    </location>
</feature>
<feature type="repeat" description="FG-GAP 5" evidence="5">
    <location>
        <begin position="474"/>
        <end position="536"/>
    </location>
</feature>
<feature type="repeat" description="FG-GAP 6" evidence="5">
    <location>
        <begin position="537"/>
        <end position="595"/>
    </location>
</feature>
<feature type="repeat" description="FG-GAP 7" evidence="5">
    <location>
        <begin position="601"/>
        <end position="661"/>
    </location>
</feature>
<feature type="short sequence motif" description="Cell attachment site" evidence="3">
    <location>
        <begin position="480"/>
        <end position="482"/>
    </location>
</feature>
<feature type="short sequence motif" description="GFFKR motif">
    <location>
        <begin position="1154"/>
        <end position="1158"/>
    </location>
</feature>
<feature type="binding site" evidence="2">
    <location>
        <position position="496"/>
    </location>
    <ligand>
        <name>Ca(2+)</name>
        <dbReference type="ChEBI" id="CHEBI:29108"/>
        <label>1</label>
    </ligand>
</feature>
<feature type="binding site" evidence="2">
    <location>
        <position position="498"/>
    </location>
    <ligand>
        <name>Ca(2+)</name>
        <dbReference type="ChEBI" id="CHEBI:29108"/>
        <label>1</label>
    </ligand>
</feature>
<feature type="binding site" evidence="2">
    <location>
        <position position="500"/>
    </location>
    <ligand>
        <name>Ca(2+)</name>
        <dbReference type="ChEBI" id="CHEBI:29108"/>
        <label>1</label>
    </ligand>
</feature>
<feature type="binding site" evidence="2">
    <location>
        <position position="504"/>
    </location>
    <ligand>
        <name>Ca(2+)</name>
        <dbReference type="ChEBI" id="CHEBI:29108"/>
        <label>1</label>
    </ligand>
</feature>
<feature type="binding site" evidence="2">
    <location>
        <position position="560"/>
    </location>
    <ligand>
        <name>Ca(2+)</name>
        <dbReference type="ChEBI" id="CHEBI:29108"/>
        <label>2</label>
    </ligand>
</feature>
<feature type="binding site" evidence="2">
    <location>
        <position position="562"/>
    </location>
    <ligand>
        <name>Ca(2+)</name>
        <dbReference type="ChEBI" id="CHEBI:29108"/>
        <label>2</label>
    </ligand>
</feature>
<feature type="binding site" evidence="2">
    <location>
        <position position="564"/>
    </location>
    <ligand>
        <name>Ca(2+)</name>
        <dbReference type="ChEBI" id="CHEBI:29108"/>
        <label>2</label>
    </ligand>
</feature>
<feature type="binding site" evidence="2">
    <location>
        <position position="568"/>
    </location>
    <ligand>
        <name>Ca(2+)</name>
        <dbReference type="ChEBI" id="CHEBI:29108"/>
        <label>2</label>
    </ligand>
</feature>
<feature type="binding site" evidence="2">
    <location>
        <position position="624"/>
    </location>
    <ligand>
        <name>Ca(2+)</name>
        <dbReference type="ChEBI" id="CHEBI:29108"/>
        <label>3</label>
    </ligand>
</feature>
<feature type="binding site" evidence="2">
    <location>
        <position position="626"/>
    </location>
    <ligand>
        <name>Ca(2+)</name>
        <dbReference type="ChEBI" id="CHEBI:29108"/>
        <label>3</label>
    </ligand>
</feature>
<feature type="binding site" evidence="2">
    <location>
        <position position="628"/>
    </location>
    <ligand>
        <name>Ca(2+)</name>
        <dbReference type="ChEBI" id="CHEBI:29108"/>
        <label>3</label>
    </ligand>
</feature>
<feature type="binding site" evidence="2">
    <location>
        <position position="632"/>
    </location>
    <ligand>
        <name>Ca(2+)</name>
        <dbReference type="ChEBI" id="CHEBI:29108"/>
        <label>3</label>
    </ligand>
</feature>
<feature type="glycosylation site" description="N-linked (GlcNAc...) asparagine" evidence="3">
    <location>
        <position position="102"/>
    </location>
</feature>
<feature type="glycosylation site" description="N-linked (GlcNAc...) asparagine" evidence="3">
    <location>
        <position position="109"/>
    </location>
</feature>
<feature type="glycosylation site" description="N-linked (GlcNAc...) asparagine" evidence="3">
    <location>
        <position position="429"/>
    </location>
</feature>
<feature type="glycosylation site" description="N-linked (GlcNAc...) asparagine" evidence="3">
    <location>
        <position position="457"/>
    </location>
</feature>
<feature type="glycosylation site" description="N-linked (GlcNAc...) asparagine" evidence="3">
    <location>
        <position position="472"/>
    </location>
</feature>
<feature type="glycosylation site" description="N-linked (GlcNAc...) asparagine" evidence="3">
    <location>
        <position position="696"/>
    </location>
</feature>
<feature type="glycosylation site" description="N-linked (GlcNAc...) asparagine" evidence="3">
    <location>
        <position position="1054"/>
    </location>
</feature>
<feature type="glycosylation site" description="N-linked (GlcNAc...) asparagine" evidence="3">
    <location>
        <position position="1071"/>
    </location>
</feature>
<feature type="glycosylation site" description="N-linked (GlcNAc...) asparagine" evidence="3">
    <location>
        <position position="1078"/>
    </location>
</feature>
<feature type="disulfide bond" evidence="1">
    <location>
        <begin position="80"/>
        <end position="89"/>
    </location>
</feature>
<feature type="disulfide bond" evidence="1">
    <location>
        <begin position="677"/>
        <end position="734"/>
    </location>
</feature>
<feature type="disulfide bond" evidence="1">
    <location>
        <begin position="786"/>
        <end position="792"/>
    </location>
</feature>
<feature type="disulfide bond" evidence="1">
    <location>
        <begin position="862"/>
        <end position="873"/>
    </location>
</feature>
<feature type="disulfide bond" evidence="1">
    <location>
        <begin position="1016"/>
        <end position="1047"/>
    </location>
</feature>
<feature type="disulfide bond" evidence="1">
    <location>
        <begin position="1052"/>
        <end position="1057"/>
    </location>
</feature>
<feature type="sequence conflict" description="In Ref. 1; CAA82877." evidence="7" ref="1">
    <original>R</original>
    <variation>Q</variation>
    <location>
        <position position="13"/>
    </location>
</feature>
<evidence type="ECO:0000250" key="1"/>
<evidence type="ECO:0000250" key="2">
    <source>
        <dbReference type="UniProtKB" id="P08648"/>
    </source>
</evidence>
<evidence type="ECO:0000255" key="3"/>
<evidence type="ECO:0000255" key="4">
    <source>
        <dbReference type="PROSITE-ProRule" id="PRU00219"/>
    </source>
</evidence>
<evidence type="ECO:0000255" key="5">
    <source>
        <dbReference type="PROSITE-ProRule" id="PRU00803"/>
    </source>
</evidence>
<evidence type="ECO:0000269" key="6">
    <source>
    </source>
</evidence>
<evidence type="ECO:0000305" key="7"/>